<dbReference type="EC" id="4.3.2.10" evidence="1"/>
<dbReference type="EMBL" id="CP000680">
    <property type="protein sequence ID" value="ABP86999.1"/>
    <property type="molecule type" value="Genomic_DNA"/>
</dbReference>
<dbReference type="SMR" id="A4Y083"/>
<dbReference type="STRING" id="399739.Pmen_4252"/>
<dbReference type="KEGG" id="pmy:Pmen_4252"/>
<dbReference type="eggNOG" id="COG0107">
    <property type="taxonomic scope" value="Bacteria"/>
</dbReference>
<dbReference type="HOGENOM" id="CLU_048577_4_0_6"/>
<dbReference type="OrthoDB" id="9781903at2"/>
<dbReference type="UniPathway" id="UPA00031">
    <property type="reaction ID" value="UER00010"/>
</dbReference>
<dbReference type="GO" id="GO:0005737">
    <property type="term" value="C:cytoplasm"/>
    <property type="evidence" value="ECO:0007669"/>
    <property type="project" value="UniProtKB-SubCell"/>
</dbReference>
<dbReference type="GO" id="GO:0000107">
    <property type="term" value="F:imidazoleglycerol-phosphate synthase activity"/>
    <property type="evidence" value="ECO:0007669"/>
    <property type="project" value="UniProtKB-UniRule"/>
</dbReference>
<dbReference type="GO" id="GO:0016829">
    <property type="term" value="F:lyase activity"/>
    <property type="evidence" value="ECO:0007669"/>
    <property type="project" value="UniProtKB-KW"/>
</dbReference>
<dbReference type="GO" id="GO:0000105">
    <property type="term" value="P:L-histidine biosynthetic process"/>
    <property type="evidence" value="ECO:0007669"/>
    <property type="project" value="UniProtKB-UniRule"/>
</dbReference>
<dbReference type="CDD" id="cd04731">
    <property type="entry name" value="HisF"/>
    <property type="match status" value="1"/>
</dbReference>
<dbReference type="FunFam" id="3.20.20.70:FF:000006">
    <property type="entry name" value="Imidazole glycerol phosphate synthase subunit HisF"/>
    <property type="match status" value="1"/>
</dbReference>
<dbReference type="Gene3D" id="3.20.20.70">
    <property type="entry name" value="Aldolase class I"/>
    <property type="match status" value="1"/>
</dbReference>
<dbReference type="HAMAP" id="MF_01013">
    <property type="entry name" value="HisF"/>
    <property type="match status" value="1"/>
</dbReference>
<dbReference type="InterPro" id="IPR013785">
    <property type="entry name" value="Aldolase_TIM"/>
</dbReference>
<dbReference type="InterPro" id="IPR006062">
    <property type="entry name" value="His_biosynth"/>
</dbReference>
<dbReference type="InterPro" id="IPR004651">
    <property type="entry name" value="HisF"/>
</dbReference>
<dbReference type="InterPro" id="IPR050064">
    <property type="entry name" value="IGPS_HisA/HisF"/>
</dbReference>
<dbReference type="InterPro" id="IPR011060">
    <property type="entry name" value="RibuloseP-bd_barrel"/>
</dbReference>
<dbReference type="NCBIfam" id="TIGR00735">
    <property type="entry name" value="hisF"/>
    <property type="match status" value="1"/>
</dbReference>
<dbReference type="PANTHER" id="PTHR21235:SF2">
    <property type="entry name" value="IMIDAZOLE GLYCEROL PHOSPHATE SYNTHASE HISHF"/>
    <property type="match status" value="1"/>
</dbReference>
<dbReference type="PANTHER" id="PTHR21235">
    <property type="entry name" value="IMIDAZOLE GLYCEROL PHOSPHATE SYNTHASE SUBUNIT HISF/H IGP SYNTHASE SUBUNIT HISF/H"/>
    <property type="match status" value="1"/>
</dbReference>
<dbReference type="Pfam" id="PF00977">
    <property type="entry name" value="His_biosynth"/>
    <property type="match status" value="1"/>
</dbReference>
<dbReference type="SUPFAM" id="SSF51366">
    <property type="entry name" value="Ribulose-phoshate binding barrel"/>
    <property type="match status" value="1"/>
</dbReference>
<sequence length="256" mass="27186">MALAKRIIPCLDVDNGRVVKGVKFENIRDAGDPVEIARRYDEQGADEITFLDITASVDGRDTTLHTVERMASQVFIPLTVGGGVRTVQDIRNLLNAGADKVSINTAAVFNPEFVGEAAARFGSQCIVVAIDAKRVSAPGEPGRWEIFTHGGRKPTGLDAVEWARKMEGLGAGEILLTSMDQDGVKSGYDLGVTRAISEAVRVPVIASGGVGNLQHLADGILEGKADAVLAASIFHFGEYTVPEAKAYLASRGIVVR</sequence>
<feature type="chain" id="PRO_1000063120" description="Imidazole glycerol phosphate synthase subunit HisF">
    <location>
        <begin position="1"/>
        <end position="256"/>
    </location>
</feature>
<feature type="active site" evidence="1">
    <location>
        <position position="12"/>
    </location>
</feature>
<feature type="active site" evidence="1">
    <location>
        <position position="131"/>
    </location>
</feature>
<accession>A4Y083</accession>
<organism>
    <name type="scientific">Ectopseudomonas mendocina (strain ymp)</name>
    <name type="common">Pseudomonas mendocina</name>
    <dbReference type="NCBI Taxonomy" id="399739"/>
    <lineage>
        <taxon>Bacteria</taxon>
        <taxon>Pseudomonadati</taxon>
        <taxon>Pseudomonadota</taxon>
        <taxon>Gammaproteobacteria</taxon>
        <taxon>Pseudomonadales</taxon>
        <taxon>Pseudomonadaceae</taxon>
        <taxon>Ectopseudomonas</taxon>
    </lineage>
</organism>
<reference key="1">
    <citation type="submission" date="2007-04" db="EMBL/GenBank/DDBJ databases">
        <title>Complete sequence of Pseudomonas mendocina ymp.</title>
        <authorList>
            <consortium name="US DOE Joint Genome Institute"/>
            <person name="Copeland A."/>
            <person name="Lucas S."/>
            <person name="Lapidus A."/>
            <person name="Barry K."/>
            <person name="Glavina del Rio T."/>
            <person name="Dalin E."/>
            <person name="Tice H."/>
            <person name="Pitluck S."/>
            <person name="Kiss H."/>
            <person name="Brettin T."/>
            <person name="Detter J.C."/>
            <person name="Bruce D."/>
            <person name="Han C."/>
            <person name="Schmutz J."/>
            <person name="Larimer F."/>
            <person name="Land M."/>
            <person name="Hauser L."/>
            <person name="Kyrpides N."/>
            <person name="Mikhailova N."/>
            <person name="Hersman L."/>
            <person name="Dubois J."/>
            <person name="Maurice P."/>
            <person name="Richardson P."/>
        </authorList>
    </citation>
    <scope>NUCLEOTIDE SEQUENCE [LARGE SCALE GENOMIC DNA]</scope>
    <source>
        <strain>ymp</strain>
    </source>
</reference>
<evidence type="ECO:0000255" key="1">
    <source>
        <dbReference type="HAMAP-Rule" id="MF_01013"/>
    </source>
</evidence>
<comment type="function">
    <text evidence="1">IGPS catalyzes the conversion of PRFAR and glutamine to IGP, AICAR and glutamate. The HisF subunit catalyzes the cyclization activity that produces IGP and AICAR from PRFAR using the ammonia provided by the HisH subunit.</text>
</comment>
<comment type="catalytic activity">
    <reaction evidence="1">
        <text>5-[(5-phospho-1-deoxy-D-ribulos-1-ylimino)methylamino]-1-(5-phospho-beta-D-ribosyl)imidazole-4-carboxamide + L-glutamine = D-erythro-1-(imidazol-4-yl)glycerol 3-phosphate + 5-amino-1-(5-phospho-beta-D-ribosyl)imidazole-4-carboxamide + L-glutamate + H(+)</text>
        <dbReference type="Rhea" id="RHEA:24793"/>
        <dbReference type="ChEBI" id="CHEBI:15378"/>
        <dbReference type="ChEBI" id="CHEBI:29985"/>
        <dbReference type="ChEBI" id="CHEBI:58278"/>
        <dbReference type="ChEBI" id="CHEBI:58359"/>
        <dbReference type="ChEBI" id="CHEBI:58475"/>
        <dbReference type="ChEBI" id="CHEBI:58525"/>
        <dbReference type="EC" id="4.3.2.10"/>
    </reaction>
</comment>
<comment type="pathway">
    <text evidence="1">Amino-acid biosynthesis; L-histidine biosynthesis; L-histidine from 5-phospho-alpha-D-ribose 1-diphosphate: step 5/9.</text>
</comment>
<comment type="subunit">
    <text evidence="1">Heterodimer of HisH and HisF.</text>
</comment>
<comment type="subcellular location">
    <subcellularLocation>
        <location evidence="1">Cytoplasm</location>
    </subcellularLocation>
</comment>
<comment type="similarity">
    <text evidence="1">Belongs to the HisA/HisF family.</text>
</comment>
<gene>
    <name evidence="1" type="primary">hisF</name>
    <name type="ordered locus">Pmen_4252</name>
</gene>
<keyword id="KW-0028">Amino-acid biosynthesis</keyword>
<keyword id="KW-0963">Cytoplasm</keyword>
<keyword id="KW-0368">Histidine biosynthesis</keyword>
<keyword id="KW-0456">Lyase</keyword>
<protein>
    <recommendedName>
        <fullName evidence="1">Imidazole glycerol phosphate synthase subunit HisF</fullName>
        <ecNumber evidence="1">4.3.2.10</ecNumber>
    </recommendedName>
    <alternativeName>
        <fullName evidence="1">IGP synthase cyclase subunit</fullName>
    </alternativeName>
    <alternativeName>
        <fullName evidence="1">IGP synthase subunit HisF</fullName>
    </alternativeName>
    <alternativeName>
        <fullName evidence="1">ImGP synthase subunit HisF</fullName>
        <shortName evidence="1">IGPS subunit HisF</shortName>
    </alternativeName>
</protein>
<name>HIS6_ECTM1</name>
<proteinExistence type="inferred from homology"/>